<evidence type="ECO:0000269" key="1">
    <source>
    </source>
</evidence>
<evidence type="ECO:0000305" key="2"/>
<comment type="function">
    <text>May be involved in the production of the exopolysaccharide (EPS) component of the extracellular matrix during biofilm formation. EPS is responsible for the adhesion of chains of cells into bundles.</text>
</comment>
<comment type="induction">
    <text evidence="1">Repressed by SinR.</text>
</comment>
<comment type="similarity">
    <text evidence="2">Belongs to the polysaccharide pyruvyl transferase family.</text>
</comment>
<gene>
    <name type="primary">epsI</name>
    <name type="synonym">yveS</name>
    <name type="ordered locus">BSU34290</name>
</gene>
<reference key="1">
    <citation type="journal article" date="1996" name="Microbiology">
        <title>Integrated mapping and sequencing of a 115 kb DNA fragment from Bacillus subtilis: sequence analysis of a 21 kb segment containing the sigL locus.</title>
        <authorList>
            <person name="Fabret C."/>
            <person name="Quentin Y."/>
            <person name="Chapal N."/>
            <person name="Guiseppi A."/>
            <person name="Haiech J."/>
            <person name="Denizot F."/>
        </authorList>
    </citation>
    <scope>NUCLEOTIDE SEQUENCE [GENOMIC DNA]</scope>
    <source>
        <strain>168trp</strain>
    </source>
</reference>
<reference key="2">
    <citation type="submission" date="1997-04" db="EMBL/GenBank/DDBJ databases">
        <authorList>
            <person name="Denizot F."/>
        </authorList>
    </citation>
    <scope>NUCLEOTIDE SEQUENCE [GENOMIC DNA]</scope>
    <source>
        <strain>168</strain>
    </source>
</reference>
<reference key="3">
    <citation type="journal article" date="1997" name="Nature">
        <title>The complete genome sequence of the Gram-positive bacterium Bacillus subtilis.</title>
        <authorList>
            <person name="Kunst F."/>
            <person name="Ogasawara N."/>
            <person name="Moszer I."/>
            <person name="Albertini A.M."/>
            <person name="Alloni G."/>
            <person name="Azevedo V."/>
            <person name="Bertero M.G."/>
            <person name="Bessieres P."/>
            <person name="Bolotin A."/>
            <person name="Borchert S."/>
            <person name="Borriss R."/>
            <person name="Boursier L."/>
            <person name="Brans A."/>
            <person name="Braun M."/>
            <person name="Brignell S.C."/>
            <person name="Bron S."/>
            <person name="Brouillet S."/>
            <person name="Bruschi C.V."/>
            <person name="Caldwell B."/>
            <person name="Capuano V."/>
            <person name="Carter N.M."/>
            <person name="Choi S.-K."/>
            <person name="Codani J.-J."/>
            <person name="Connerton I.F."/>
            <person name="Cummings N.J."/>
            <person name="Daniel R.A."/>
            <person name="Denizot F."/>
            <person name="Devine K.M."/>
            <person name="Duesterhoeft A."/>
            <person name="Ehrlich S.D."/>
            <person name="Emmerson P.T."/>
            <person name="Entian K.-D."/>
            <person name="Errington J."/>
            <person name="Fabret C."/>
            <person name="Ferrari E."/>
            <person name="Foulger D."/>
            <person name="Fritz C."/>
            <person name="Fujita M."/>
            <person name="Fujita Y."/>
            <person name="Fuma S."/>
            <person name="Galizzi A."/>
            <person name="Galleron N."/>
            <person name="Ghim S.-Y."/>
            <person name="Glaser P."/>
            <person name="Goffeau A."/>
            <person name="Golightly E.J."/>
            <person name="Grandi G."/>
            <person name="Guiseppi G."/>
            <person name="Guy B.J."/>
            <person name="Haga K."/>
            <person name="Haiech J."/>
            <person name="Harwood C.R."/>
            <person name="Henaut A."/>
            <person name="Hilbert H."/>
            <person name="Holsappel S."/>
            <person name="Hosono S."/>
            <person name="Hullo M.-F."/>
            <person name="Itaya M."/>
            <person name="Jones L.-M."/>
            <person name="Joris B."/>
            <person name="Karamata D."/>
            <person name="Kasahara Y."/>
            <person name="Klaerr-Blanchard M."/>
            <person name="Klein C."/>
            <person name="Kobayashi Y."/>
            <person name="Koetter P."/>
            <person name="Koningstein G."/>
            <person name="Krogh S."/>
            <person name="Kumano M."/>
            <person name="Kurita K."/>
            <person name="Lapidus A."/>
            <person name="Lardinois S."/>
            <person name="Lauber J."/>
            <person name="Lazarevic V."/>
            <person name="Lee S.-M."/>
            <person name="Levine A."/>
            <person name="Liu H."/>
            <person name="Masuda S."/>
            <person name="Mauel C."/>
            <person name="Medigue C."/>
            <person name="Medina N."/>
            <person name="Mellado R.P."/>
            <person name="Mizuno M."/>
            <person name="Moestl D."/>
            <person name="Nakai S."/>
            <person name="Noback M."/>
            <person name="Noone D."/>
            <person name="O'Reilly M."/>
            <person name="Ogawa K."/>
            <person name="Ogiwara A."/>
            <person name="Oudega B."/>
            <person name="Park S.-H."/>
            <person name="Parro V."/>
            <person name="Pohl T.M."/>
            <person name="Portetelle D."/>
            <person name="Porwollik S."/>
            <person name="Prescott A.M."/>
            <person name="Presecan E."/>
            <person name="Pujic P."/>
            <person name="Purnelle B."/>
            <person name="Rapoport G."/>
            <person name="Rey M."/>
            <person name="Reynolds S."/>
            <person name="Rieger M."/>
            <person name="Rivolta C."/>
            <person name="Rocha E."/>
            <person name="Roche B."/>
            <person name="Rose M."/>
            <person name="Sadaie Y."/>
            <person name="Sato T."/>
            <person name="Scanlan E."/>
            <person name="Schleich S."/>
            <person name="Schroeter R."/>
            <person name="Scoffone F."/>
            <person name="Sekiguchi J."/>
            <person name="Sekowska A."/>
            <person name="Seror S.J."/>
            <person name="Serror P."/>
            <person name="Shin B.-S."/>
            <person name="Soldo B."/>
            <person name="Sorokin A."/>
            <person name="Tacconi E."/>
            <person name="Takagi T."/>
            <person name="Takahashi H."/>
            <person name="Takemaru K."/>
            <person name="Takeuchi M."/>
            <person name="Tamakoshi A."/>
            <person name="Tanaka T."/>
            <person name="Terpstra P."/>
            <person name="Tognoni A."/>
            <person name="Tosato V."/>
            <person name="Uchiyama S."/>
            <person name="Vandenbol M."/>
            <person name="Vannier F."/>
            <person name="Vassarotti A."/>
            <person name="Viari A."/>
            <person name="Wambutt R."/>
            <person name="Wedler E."/>
            <person name="Wedler H."/>
            <person name="Weitzenegger T."/>
            <person name="Winters P."/>
            <person name="Wipat A."/>
            <person name="Yamamoto H."/>
            <person name="Yamane K."/>
            <person name="Yasumoto K."/>
            <person name="Yata K."/>
            <person name="Yoshida K."/>
            <person name="Yoshikawa H.-F."/>
            <person name="Zumstein E."/>
            <person name="Yoshikawa H."/>
            <person name="Danchin A."/>
        </authorList>
    </citation>
    <scope>NUCLEOTIDE SEQUENCE [LARGE SCALE GENOMIC DNA]</scope>
    <source>
        <strain>168</strain>
    </source>
</reference>
<reference key="4">
    <citation type="journal article" date="2004" name="J. Bacteriol.">
        <title>Genes involved in formation of structured multicellular communities by Bacillus subtilis.</title>
        <authorList>
            <person name="Branda S.S."/>
            <person name="Gonzalez-Pastor J.E."/>
            <person name="Dervyn E."/>
            <person name="Ehrlich S.D."/>
            <person name="Losick R."/>
            <person name="Kolter R."/>
        </authorList>
    </citation>
    <scope>PROBABLE FUNCTION</scope>
</reference>
<reference key="5">
    <citation type="journal article" date="2005" name="Mol. Microbiol.">
        <title>A master regulator for biofilm formation by Bacillus subtilis.</title>
        <authorList>
            <person name="Kearns D.B."/>
            <person name="Chu F."/>
            <person name="Branda S.S."/>
            <person name="Kolter R."/>
            <person name="Losick R."/>
        </authorList>
    </citation>
    <scope>PROBABLE FUNCTION</scope>
    <scope>INDUCTION</scope>
    <scope>NOMENCLATURE</scope>
</reference>
<name>EPSI_BACSU</name>
<accession>P71058</accession>
<accession>O08177</accession>
<accession>Q795I7</accession>
<dbReference type="EC" id="2.-.-.-"/>
<dbReference type="EMBL" id="Z71928">
    <property type="protein sequence ID" value="CAA96476.1"/>
    <property type="molecule type" value="Genomic_DNA"/>
</dbReference>
<dbReference type="EMBL" id="Z94043">
    <property type="protein sequence ID" value="CAB08031.1"/>
    <property type="molecule type" value="Genomic_DNA"/>
</dbReference>
<dbReference type="EMBL" id="AL009126">
    <property type="protein sequence ID" value="CAB15434.1"/>
    <property type="molecule type" value="Genomic_DNA"/>
</dbReference>
<dbReference type="PIR" id="H70036">
    <property type="entry name" value="H70036"/>
</dbReference>
<dbReference type="RefSeq" id="NP_391309.1">
    <property type="nucleotide sequence ID" value="NC_000964.3"/>
</dbReference>
<dbReference type="RefSeq" id="WP_003228262.1">
    <property type="nucleotide sequence ID" value="NZ_OZ025638.1"/>
</dbReference>
<dbReference type="SMR" id="P71058"/>
<dbReference type="FunCoup" id="P71058">
    <property type="interactions" value="20"/>
</dbReference>
<dbReference type="STRING" id="224308.BSU34290"/>
<dbReference type="PaxDb" id="224308-BSU34290"/>
<dbReference type="EnsemblBacteria" id="CAB15434">
    <property type="protein sequence ID" value="CAB15434"/>
    <property type="gene ID" value="BSU_34290"/>
</dbReference>
<dbReference type="GeneID" id="937256"/>
<dbReference type="KEGG" id="bsu:BSU34290"/>
<dbReference type="PATRIC" id="fig|224308.179.peg.3715"/>
<dbReference type="eggNOG" id="COG5039">
    <property type="taxonomic scope" value="Bacteria"/>
</dbReference>
<dbReference type="InParanoid" id="P71058"/>
<dbReference type="OrthoDB" id="9807674at2"/>
<dbReference type="PhylomeDB" id="P71058"/>
<dbReference type="BioCyc" id="BSUB:BSU34290-MONOMER"/>
<dbReference type="Proteomes" id="UP000001570">
    <property type="component" value="Chromosome"/>
</dbReference>
<dbReference type="GO" id="GO:0016740">
    <property type="term" value="F:transferase activity"/>
    <property type="evidence" value="ECO:0007669"/>
    <property type="project" value="UniProtKB-KW"/>
</dbReference>
<dbReference type="GO" id="GO:0000271">
    <property type="term" value="P:polysaccharide biosynthetic process"/>
    <property type="evidence" value="ECO:0007669"/>
    <property type="project" value="UniProtKB-KW"/>
</dbReference>
<dbReference type="InterPro" id="IPR007345">
    <property type="entry name" value="Polysacch_pyruvyl_Trfase"/>
</dbReference>
<dbReference type="Pfam" id="PF04230">
    <property type="entry name" value="PS_pyruv_trans"/>
    <property type="match status" value="1"/>
</dbReference>
<sequence>MSLQSLKINFAEWLLLKVKYPSQYWLGAADQPVKAAAHQKKIILTLLPSHDNLGDHAIAYASKAFLEQEYPDFDIVEVDMKDIYKSAKSLIRSRHPEDMVFIIGGGNMGDLYRYEEWTRRFIIKTFHDYRVVQLPATAHFSDTKKGRKELKRAQKIYNAHPGLLLMARDETTYQFMKQHFQEKTILKQPDMVLYLDRSKAPAEREGVYMCLREDQESVLQEEQRNRVKAALCEEFGEIKSFTTTIGRRVSRDTREHELEALWSKLQSAEAVVTDRLHGMIFCALTGTPCVVIRSFDHKVMEGYQWLKDIPFMKLIEHPEPERVTAAVNELLTKETSRAGFPRDVYFKGLRDKISGEAQ</sequence>
<protein>
    <recommendedName>
        <fullName>Putative pyruvyl transferase EpsI</fullName>
        <ecNumber>2.-.-.-</ecNumber>
    </recommendedName>
</protein>
<feature type="chain" id="PRO_0000360701" description="Putative pyruvyl transferase EpsI">
    <location>
        <begin position="1"/>
        <end position="358"/>
    </location>
</feature>
<organism>
    <name type="scientific">Bacillus subtilis (strain 168)</name>
    <dbReference type="NCBI Taxonomy" id="224308"/>
    <lineage>
        <taxon>Bacteria</taxon>
        <taxon>Bacillati</taxon>
        <taxon>Bacillota</taxon>
        <taxon>Bacilli</taxon>
        <taxon>Bacillales</taxon>
        <taxon>Bacillaceae</taxon>
        <taxon>Bacillus</taxon>
    </lineage>
</organism>
<keyword id="KW-0270">Exopolysaccharide synthesis</keyword>
<keyword id="KW-1185">Reference proteome</keyword>
<keyword id="KW-0808">Transferase</keyword>
<proteinExistence type="evidence at transcript level"/>